<accession>B1X6T0</accession>
<comment type="function">
    <text evidence="1">Joins adenosylcobinamide-GDP and alpha-ribazole to generate adenosylcobalamin (Ado-cobalamin). Also synthesizes adenosylcobalamin 5'-phosphate from adenosylcobinamide-GDP and alpha-ribazole 5'-phosphate.</text>
</comment>
<comment type="catalytic activity">
    <reaction evidence="1">
        <text>alpha-ribazole + adenosylcob(III)inamide-GDP = adenosylcob(III)alamin + GMP + H(+)</text>
        <dbReference type="Rhea" id="RHEA:16049"/>
        <dbReference type="ChEBI" id="CHEBI:10329"/>
        <dbReference type="ChEBI" id="CHEBI:15378"/>
        <dbReference type="ChEBI" id="CHEBI:18408"/>
        <dbReference type="ChEBI" id="CHEBI:58115"/>
        <dbReference type="ChEBI" id="CHEBI:60487"/>
        <dbReference type="EC" id="2.7.8.26"/>
    </reaction>
</comment>
<comment type="catalytic activity">
    <reaction evidence="1">
        <text>alpha-ribazole 5'-phosphate + adenosylcob(III)inamide-GDP = adenosylcob(III)alamin 5'-phosphate + GMP + H(+)</text>
        <dbReference type="Rhea" id="RHEA:23560"/>
        <dbReference type="ChEBI" id="CHEBI:15378"/>
        <dbReference type="ChEBI" id="CHEBI:57918"/>
        <dbReference type="ChEBI" id="CHEBI:58115"/>
        <dbReference type="ChEBI" id="CHEBI:60487"/>
        <dbReference type="ChEBI" id="CHEBI:60493"/>
        <dbReference type="EC" id="2.7.8.26"/>
    </reaction>
</comment>
<comment type="cofactor">
    <cofactor evidence="1">
        <name>Mg(2+)</name>
        <dbReference type="ChEBI" id="CHEBI:18420"/>
    </cofactor>
</comment>
<comment type="pathway">
    <text evidence="1">Cofactor biosynthesis; adenosylcobalamin biosynthesis; adenosylcobalamin from cob(II)yrinate a,c-diamide: step 7/7.</text>
</comment>
<comment type="subcellular location">
    <subcellularLocation>
        <location evidence="1">Cell inner membrane</location>
        <topology evidence="1">Multi-pass membrane protein</topology>
    </subcellularLocation>
</comment>
<comment type="similarity">
    <text evidence="1">Belongs to the CobS family.</text>
</comment>
<keyword id="KW-0997">Cell inner membrane</keyword>
<keyword id="KW-1003">Cell membrane</keyword>
<keyword id="KW-0169">Cobalamin biosynthesis</keyword>
<keyword id="KW-0460">Magnesium</keyword>
<keyword id="KW-0472">Membrane</keyword>
<keyword id="KW-0808">Transferase</keyword>
<keyword id="KW-0812">Transmembrane</keyword>
<keyword id="KW-1133">Transmembrane helix</keyword>
<name>COBS_ECODH</name>
<protein>
    <recommendedName>
        <fullName evidence="1">Adenosylcobinamide-GDP ribazoletransferase</fullName>
        <ecNumber evidence="1">2.7.8.26</ecNumber>
    </recommendedName>
    <alternativeName>
        <fullName evidence="1">Cobalamin synthase</fullName>
    </alternativeName>
    <alternativeName>
        <fullName evidence="1">Cobalamin-5'-phosphate synthase</fullName>
    </alternativeName>
</protein>
<proteinExistence type="inferred from homology"/>
<sequence length="247" mass="26386">MSKLFWAMLSFITRLPVPRRWSQGLDFEHYSRGIITFPLIGLLLGAISGLVFMVLQAWCGAPLAALFSVLVLVLMTGGFHLDGLADTCDGVFSARSRDRMLEIMRDSRLGTHGGLALIFVVLAKILVLSELALRGESILASLAAACAVSRGTAALLMYRHRYAREEGLGNVFIGKIDGRQTCVTLGLAAIFAAVLLPGMHGVAAMVVTMVAIFILGQLLKRTLGGQTGDTLGAAIELGELVFLLALL</sequence>
<gene>
    <name evidence="1" type="primary">cobS</name>
    <name type="ordered locus">ECDH10B_2136</name>
</gene>
<dbReference type="EC" id="2.7.8.26" evidence="1"/>
<dbReference type="EMBL" id="CP000948">
    <property type="protein sequence ID" value="ACB03166.1"/>
    <property type="molecule type" value="Genomic_DNA"/>
</dbReference>
<dbReference type="RefSeq" id="WP_001326708.1">
    <property type="nucleotide sequence ID" value="NC_010473.1"/>
</dbReference>
<dbReference type="KEGG" id="ecd:ECDH10B_2136"/>
<dbReference type="HOGENOM" id="CLU_057426_1_1_6"/>
<dbReference type="UniPathway" id="UPA00148">
    <property type="reaction ID" value="UER00238"/>
</dbReference>
<dbReference type="GO" id="GO:0005886">
    <property type="term" value="C:plasma membrane"/>
    <property type="evidence" value="ECO:0007669"/>
    <property type="project" value="UniProtKB-SubCell"/>
</dbReference>
<dbReference type="GO" id="GO:0051073">
    <property type="term" value="F:adenosylcobinamide-GDP ribazoletransferase activity"/>
    <property type="evidence" value="ECO:0007669"/>
    <property type="project" value="UniProtKB-UniRule"/>
</dbReference>
<dbReference type="GO" id="GO:0008818">
    <property type="term" value="F:cobalamin 5'-phosphate synthase activity"/>
    <property type="evidence" value="ECO:0007669"/>
    <property type="project" value="UniProtKB-UniRule"/>
</dbReference>
<dbReference type="GO" id="GO:0009236">
    <property type="term" value="P:cobalamin biosynthetic process"/>
    <property type="evidence" value="ECO:0007669"/>
    <property type="project" value="UniProtKB-UniRule"/>
</dbReference>
<dbReference type="HAMAP" id="MF_00719">
    <property type="entry name" value="CobS"/>
    <property type="match status" value="1"/>
</dbReference>
<dbReference type="InterPro" id="IPR003805">
    <property type="entry name" value="CobS"/>
</dbReference>
<dbReference type="NCBIfam" id="TIGR00317">
    <property type="entry name" value="cobS"/>
    <property type="match status" value="1"/>
</dbReference>
<dbReference type="PANTHER" id="PTHR34148">
    <property type="entry name" value="ADENOSYLCOBINAMIDE-GDP RIBAZOLETRANSFERASE"/>
    <property type="match status" value="1"/>
</dbReference>
<dbReference type="PANTHER" id="PTHR34148:SF1">
    <property type="entry name" value="ADENOSYLCOBINAMIDE-GDP RIBAZOLETRANSFERASE"/>
    <property type="match status" value="1"/>
</dbReference>
<dbReference type="Pfam" id="PF02654">
    <property type="entry name" value="CobS"/>
    <property type="match status" value="1"/>
</dbReference>
<evidence type="ECO:0000255" key="1">
    <source>
        <dbReference type="HAMAP-Rule" id="MF_00719"/>
    </source>
</evidence>
<organism>
    <name type="scientific">Escherichia coli (strain K12 / DH10B)</name>
    <dbReference type="NCBI Taxonomy" id="316385"/>
    <lineage>
        <taxon>Bacteria</taxon>
        <taxon>Pseudomonadati</taxon>
        <taxon>Pseudomonadota</taxon>
        <taxon>Gammaproteobacteria</taxon>
        <taxon>Enterobacterales</taxon>
        <taxon>Enterobacteriaceae</taxon>
        <taxon>Escherichia</taxon>
    </lineage>
</organism>
<reference key="1">
    <citation type="journal article" date="2008" name="J. Bacteriol.">
        <title>The complete genome sequence of Escherichia coli DH10B: insights into the biology of a laboratory workhorse.</title>
        <authorList>
            <person name="Durfee T."/>
            <person name="Nelson R."/>
            <person name="Baldwin S."/>
            <person name="Plunkett G. III"/>
            <person name="Burland V."/>
            <person name="Mau B."/>
            <person name="Petrosino J.F."/>
            <person name="Qin X."/>
            <person name="Muzny D.M."/>
            <person name="Ayele M."/>
            <person name="Gibbs R.A."/>
            <person name="Csorgo B."/>
            <person name="Posfai G."/>
            <person name="Weinstock G.M."/>
            <person name="Blattner F.R."/>
        </authorList>
    </citation>
    <scope>NUCLEOTIDE SEQUENCE [LARGE SCALE GENOMIC DNA]</scope>
    <source>
        <strain>K12 / DH10B</strain>
    </source>
</reference>
<feature type="chain" id="PRO_1000132578" description="Adenosylcobinamide-GDP ribazoletransferase">
    <location>
        <begin position="1"/>
        <end position="247"/>
    </location>
</feature>
<feature type="transmembrane region" description="Helical" evidence="1">
    <location>
        <begin position="34"/>
        <end position="54"/>
    </location>
</feature>
<feature type="transmembrane region" description="Helical" evidence="1">
    <location>
        <begin position="59"/>
        <end position="79"/>
    </location>
</feature>
<feature type="transmembrane region" description="Helical" evidence="1">
    <location>
        <begin position="113"/>
        <end position="133"/>
    </location>
</feature>
<feature type="transmembrane region" description="Helical" evidence="1">
    <location>
        <begin position="138"/>
        <end position="158"/>
    </location>
</feature>
<feature type="transmembrane region" description="Helical" evidence="1">
    <location>
        <begin position="194"/>
        <end position="214"/>
    </location>
</feature>